<dbReference type="EMBL" id="AJ248283">
    <property type="protein sequence ID" value="CAB48925.1"/>
    <property type="molecule type" value="Genomic_DNA"/>
</dbReference>
<dbReference type="EMBL" id="HE613800">
    <property type="protein sequence ID" value="CCE69367.1"/>
    <property type="molecule type" value="Genomic_DNA"/>
</dbReference>
<dbReference type="PIR" id="F75184">
    <property type="entry name" value="F75184"/>
</dbReference>
<dbReference type="RefSeq" id="WP_010867125.1">
    <property type="nucleotide sequence ID" value="NC_000868.1"/>
</dbReference>
<dbReference type="SMR" id="Q9V2S3"/>
<dbReference type="STRING" id="272844.PAB2353"/>
<dbReference type="KEGG" id="pab:PAB2353"/>
<dbReference type="PATRIC" id="fig|272844.11.peg.1"/>
<dbReference type="eggNOG" id="arCOG04372">
    <property type="taxonomic scope" value="Archaea"/>
</dbReference>
<dbReference type="HOGENOM" id="CLU_074237_4_0_2"/>
<dbReference type="OrthoDB" id="8842at2157"/>
<dbReference type="PhylomeDB" id="Q9V2S3"/>
<dbReference type="Proteomes" id="UP000000810">
    <property type="component" value="Chromosome"/>
</dbReference>
<dbReference type="Proteomes" id="UP000009139">
    <property type="component" value="Chromosome"/>
</dbReference>
<dbReference type="GO" id="GO:0015934">
    <property type="term" value="C:large ribosomal subunit"/>
    <property type="evidence" value="ECO:0007669"/>
    <property type="project" value="TreeGrafter"/>
</dbReference>
<dbReference type="GO" id="GO:0070180">
    <property type="term" value="F:large ribosomal subunit rRNA binding"/>
    <property type="evidence" value="ECO:0007669"/>
    <property type="project" value="UniProtKB-UniRule"/>
</dbReference>
<dbReference type="GO" id="GO:0003735">
    <property type="term" value="F:structural constituent of ribosome"/>
    <property type="evidence" value="ECO:0007669"/>
    <property type="project" value="InterPro"/>
</dbReference>
<dbReference type="GO" id="GO:0006412">
    <property type="term" value="P:translation"/>
    <property type="evidence" value="ECO:0007669"/>
    <property type="project" value="UniProtKB-UniRule"/>
</dbReference>
<dbReference type="CDD" id="cd00349">
    <property type="entry name" value="Ribosomal_L11"/>
    <property type="match status" value="1"/>
</dbReference>
<dbReference type="FunFam" id="1.10.10.250:FF:000006">
    <property type="entry name" value="50S ribosomal protein L11"/>
    <property type="match status" value="1"/>
</dbReference>
<dbReference type="FunFam" id="3.30.1550.10:FF:000007">
    <property type="entry name" value="50S ribosomal protein L11"/>
    <property type="match status" value="1"/>
</dbReference>
<dbReference type="Gene3D" id="1.10.10.250">
    <property type="entry name" value="Ribosomal protein L11, C-terminal domain"/>
    <property type="match status" value="1"/>
</dbReference>
<dbReference type="Gene3D" id="3.30.1550.10">
    <property type="entry name" value="Ribosomal protein L11/L12, N-terminal domain"/>
    <property type="match status" value="1"/>
</dbReference>
<dbReference type="HAMAP" id="MF_00736">
    <property type="entry name" value="Ribosomal_uL11"/>
    <property type="match status" value="1"/>
</dbReference>
<dbReference type="InterPro" id="IPR000911">
    <property type="entry name" value="Ribosomal_uL11"/>
</dbReference>
<dbReference type="InterPro" id="IPR020783">
    <property type="entry name" value="Ribosomal_uL11_C"/>
</dbReference>
<dbReference type="InterPro" id="IPR036769">
    <property type="entry name" value="Ribosomal_uL11_C_sf"/>
</dbReference>
<dbReference type="InterPro" id="IPR020785">
    <property type="entry name" value="Ribosomal_uL11_CS"/>
</dbReference>
<dbReference type="InterPro" id="IPR020784">
    <property type="entry name" value="Ribosomal_uL11_N"/>
</dbReference>
<dbReference type="InterPro" id="IPR036796">
    <property type="entry name" value="Ribosomal_uL11_N_sf"/>
</dbReference>
<dbReference type="NCBIfam" id="NF002232">
    <property type="entry name" value="PRK01143.1"/>
    <property type="match status" value="1"/>
</dbReference>
<dbReference type="PANTHER" id="PTHR11661">
    <property type="entry name" value="60S RIBOSOMAL PROTEIN L12"/>
    <property type="match status" value="1"/>
</dbReference>
<dbReference type="PANTHER" id="PTHR11661:SF1">
    <property type="entry name" value="LARGE RIBOSOMAL SUBUNIT PROTEIN UL11M"/>
    <property type="match status" value="1"/>
</dbReference>
<dbReference type="Pfam" id="PF00298">
    <property type="entry name" value="Ribosomal_L11"/>
    <property type="match status" value="1"/>
</dbReference>
<dbReference type="Pfam" id="PF03946">
    <property type="entry name" value="Ribosomal_L11_N"/>
    <property type="match status" value="1"/>
</dbReference>
<dbReference type="SMART" id="SM00649">
    <property type="entry name" value="RL11"/>
    <property type="match status" value="1"/>
</dbReference>
<dbReference type="SUPFAM" id="SSF54747">
    <property type="entry name" value="Ribosomal L11/L12e N-terminal domain"/>
    <property type="match status" value="1"/>
</dbReference>
<dbReference type="SUPFAM" id="SSF46906">
    <property type="entry name" value="Ribosomal protein L11, C-terminal domain"/>
    <property type="match status" value="1"/>
</dbReference>
<dbReference type="PROSITE" id="PS00359">
    <property type="entry name" value="RIBOSOMAL_L11"/>
    <property type="match status" value="1"/>
</dbReference>
<name>RL11_PYRAB</name>
<comment type="function">
    <text evidence="1">Forms part of the ribosomal stalk which helps the ribosome interact with GTP-bound translation factors.</text>
</comment>
<comment type="subunit">
    <text evidence="1">Part of the ribosomal stalk of the 50S ribosomal subunit. Interacts with L10 and the large rRNA to form the base of the stalk. L10 forms an elongated spine to which L12 dimers bind in a sequential fashion forming a multimeric L10(L12)X complex.</text>
</comment>
<comment type="similarity">
    <text evidence="1">Belongs to the universal ribosomal protein uL11 family.</text>
</comment>
<proteinExistence type="inferred from homology"/>
<protein>
    <recommendedName>
        <fullName evidence="1">Large ribosomal subunit protein uL11</fullName>
    </recommendedName>
    <alternativeName>
        <fullName evidence="2">50S ribosomal protein L11</fullName>
    </alternativeName>
</protein>
<gene>
    <name evidence="1" type="primary">rpl11</name>
    <name type="ordered locus">PYRAB00020</name>
    <name type="ORF">PAB2353</name>
</gene>
<sequence>MKKQVVEVLVEGGKATPGPPLGPAIGPLGLNVKQVVDKINEATKEFAGMQVPVKIIVDPVTKQFEIEVGVPPTSQLIKKELGLEKGSGEPKHNIVGNLTMEQVIKIAKMKRNQMLALTLKAAAKEVIGTALSMGVTVEGKDPREVQREIDEGVYDELFEKAEKE</sequence>
<keyword id="KW-0687">Ribonucleoprotein</keyword>
<keyword id="KW-0689">Ribosomal protein</keyword>
<keyword id="KW-0694">RNA-binding</keyword>
<keyword id="KW-0699">rRNA-binding</keyword>
<organism>
    <name type="scientific">Pyrococcus abyssi (strain GE5 / Orsay)</name>
    <dbReference type="NCBI Taxonomy" id="272844"/>
    <lineage>
        <taxon>Archaea</taxon>
        <taxon>Methanobacteriati</taxon>
        <taxon>Methanobacteriota</taxon>
        <taxon>Thermococci</taxon>
        <taxon>Thermococcales</taxon>
        <taxon>Thermococcaceae</taxon>
        <taxon>Pyrococcus</taxon>
    </lineage>
</organism>
<accession>Q9V2S3</accession>
<accession>G8ZFH6</accession>
<reference key="1">
    <citation type="journal article" date="2003" name="Mol. Microbiol.">
        <title>An integrated analysis of the genome of the hyperthermophilic archaeon Pyrococcus abyssi.</title>
        <authorList>
            <person name="Cohen G.N."/>
            <person name="Barbe V."/>
            <person name="Flament D."/>
            <person name="Galperin M."/>
            <person name="Heilig R."/>
            <person name="Lecompte O."/>
            <person name="Poch O."/>
            <person name="Prieur D."/>
            <person name="Querellou J."/>
            <person name="Ripp R."/>
            <person name="Thierry J.-C."/>
            <person name="Van der Oost J."/>
            <person name="Weissenbach J."/>
            <person name="Zivanovic Y."/>
            <person name="Forterre P."/>
        </authorList>
    </citation>
    <scope>NUCLEOTIDE SEQUENCE [LARGE SCALE GENOMIC DNA]</scope>
    <source>
        <strain>GE5 / Orsay</strain>
    </source>
</reference>
<reference key="2">
    <citation type="journal article" date="2012" name="Curr. Microbiol.">
        <title>Re-annotation of two hyperthermophilic archaea Pyrococcus abyssi GE5 and Pyrococcus furiosus DSM 3638.</title>
        <authorList>
            <person name="Gao J."/>
            <person name="Wang J."/>
        </authorList>
    </citation>
    <scope>GENOME REANNOTATION</scope>
    <source>
        <strain>GE5 / Orsay</strain>
    </source>
</reference>
<evidence type="ECO:0000255" key="1">
    <source>
        <dbReference type="HAMAP-Rule" id="MF_00736"/>
    </source>
</evidence>
<evidence type="ECO:0000305" key="2"/>
<feature type="chain" id="PRO_0000104442" description="Large ribosomal subunit protein uL11">
    <location>
        <begin position="1"/>
        <end position="164"/>
    </location>
</feature>